<gene>
    <name evidence="1" type="primary">trmD</name>
    <name type="ordered locus">Lreu_1151</name>
</gene>
<organism>
    <name type="scientific">Limosilactobacillus reuteri (strain DSM 20016)</name>
    <name type="common">Lactobacillus reuteri</name>
    <dbReference type="NCBI Taxonomy" id="557436"/>
    <lineage>
        <taxon>Bacteria</taxon>
        <taxon>Bacillati</taxon>
        <taxon>Bacillota</taxon>
        <taxon>Bacilli</taxon>
        <taxon>Lactobacillales</taxon>
        <taxon>Lactobacillaceae</taxon>
        <taxon>Limosilactobacillus</taxon>
    </lineage>
</organism>
<dbReference type="EC" id="2.1.1.228" evidence="1"/>
<dbReference type="EMBL" id="CP000705">
    <property type="protein sequence ID" value="ABQ83408.1"/>
    <property type="molecule type" value="Genomic_DNA"/>
</dbReference>
<dbReference type="RefSeq" id="WP_003663813.1">
    <property type="nucleotide sequence ID" value="NZ_AZDD01000001.1"/>
</dbReference>
<dbReference type="SMR" id="A5VKN4"/>
<dbReference type="STRING" id="557436.Lreu_1151"/>
<dbReference type="GeneID" id="77191820"/>
<dbReference type="KEGG" id="lre:Lreu_1151"/>
<dbReference type="PATRIC" id="fig|557436.17.peg.17"/>
<dbReference type="eggNOG" id="COG0336">
    <property type="taxonomic scope" value="Bacteria"/>
</dbReference>
<dbReference type="HOGENOM" id="CLU_047363_0_1_9"/>
<dbReference type="Proteomes" id="UP000001991">
    <property type="component" value="Chromosome"/>
</dbReference>
<dbReference type="GO" id="GO:0005829">
    <property type="term" value="C:cytosol"/>
    <property type="evidence" value="ECO:0007669"/>
    <property type="project" value="TreeGrafter"/>
</dbReference>
<dbReference type="GO" id="GO:0052906">
    <property type="term" value="F:tRNA (guanine(37)-N1)-methyltransferase activity"/>
    <property type="evidence" value="ECO:0007669"/>
    <property type="project" value="UniProtKB-UniRule"/>
</dbReference>
<dbReference type="GO" id="GO:0002939">
    <property type="term" value="P:tRNA N1-guanine methylation"/>
    <property type="evidence" value="ECO:0007669"/>
    <property type="project" value="TreeGrafter"/>
</dbReference>
<dbReference type="CDD" id="cd18080">
    <property type="entry name" value="TrmD-like"/>
    <property type="match status" value="1"/>
</dbReference>
<dbReference type="FunFam" id="1.10.1270.20:FF:000001">
    <property type="entry name" value="tRNA (guanine-N(1)-)-methyltransferase"/>
    <property type="match status" value="1"/>
</dbReference>
<dbReference type="FunFam" id="3.40.1280.10:FF:000001">
    <property type="entry name" value="tRNA (guanine-N(1)-)-methyltransferase"/>
    <property type="match status" value="1"/>
</dbReference>
<dbReference type="Gene3D" id="3.40.1280.10">
    <property type="match status" value="1"/>
</dbReference>
<dbReference type="Gene3D" id="1.10.1270.20">
    <property type="entry name" value="tRNA(m1g37)methyltransferase, domain 2"/>
    <property type="match status" value="1"/>
</dbReference>
<dbReference type="HAMAP" id="MF_00605">
    <property type="entry name" value="TrmD"/>
    <property type="match status" value="1"/>
</dbReference>
<dbReference type="InterPro" id="IPR029028">
    <property type="entry name" value="Alpha/beta_knot_MTases"/>
</dbReference>
<dbReference type="InterPro" id="IPR023148">
    <property type="entry name" value="tRNA_m1G_MeTrfase_C_sf"/>
</dbReference>
<dbReference type="InterPro" id="IPR002649">
    <property type="entry name" value="tRNA_m1G_MeTrfase_TrmD"/>
</dbReference>
<dbReference type="InterPro" id="IPR029026">
    <property type="entry name" value="tRNA_m1G_MTases_N"/>
</dbReference>
<dbReference type="InterPro" id="IPR016009">
    <property type="entry name" value="tRNA_MeTrfase_TRMD/TRM10"/>
</dbReference>
<dbReference type="NCBIfam" id="NF000648">
    <property type="entry name" value="PRK00026.1"/>
    <property type="match status" value="1"/>
</dbReference>
<dbReference type="NCBIfam" id="TIGR00088">
    <property type="entry name" value="trmD"/>
    <property type="match status" value="1"/>
</dbReference>
<dbReference type="PANTHER" id="PTHR46417">
    <property type="entry name" value="TRNA (GUANINE-N(1)-)-METHYLTRANSFERASE"/>
    <property type="match status" value="1"/>
</dbReference>
<dbReference type="PANTHER" id="PTHR46417:SF1">
    <property type="entry name" value="TRNA (GUANINE-N(1)-)-METHYLTRANSFERASE"/>
    <property type="match status" value="1"/>
</dbReference>
<dbReference type="Pfam" id="PF01746">
    <property type="entry name" value="tRNA_m1G_MT"/>
    <property type="match status" value="1"/>
</dbReference>
<dbReference type="PIRSF" id="PIRSF000386">
    <property type="entry name" value="tRNA_mtase"/>
    <property type="match status" value="1"/>
</dbReference>
<dbReference type="SUPFAM" id="SSF75217">
    <property type="entry name" value="alpha/beta knot"/>
    <property type="match status" value="1"/>
</dbReference>
<comment type="function">
    <text evidence="1">Specifically methylates guanosine-37 in various tRNAs.</text>
</comment>
<comment type="catalytic activity">
    <reaction evidence="1">
        <text>guanosine(37) in tRNA + S-adenosyl-L-methionine = N(1)-methylguanosine(37) in tRNA + S-adenosyl-L-homocysteine + H(+)</text>
        <dbReference type="Rhea" id="RHEA:36899"/>
        <dbReference type="Rhea" id="RHEA-COMP:10145"/>
        <dbReference type="Rhea" id="RHEA-COMP:10147"/>
        <dbReference type="ChEBI" id="CHEBI:15378"/>
        <dbReference type="ChEBI" id="CHEBI:57856"/>
        <dbReference type="ChEBI" id="CHEBI:59789"/>
        <dbReference type="ChEBI" id="CHEBI:73542"/>
        <dbReference type="ChEBI" id="CHEBI:74269"/>
        <dbReference type="EC" id="2.1.1.228"/>
    </reaction>
</comment>
<comment type="subunit">
    <text evidence="1">Homodimer.</text>
</comment>
<comment type="subcellular location">
    <subcellularLocation>
        <location evidence="1">Cytoplasm</location>
    </subcellularLocation>
</comment>
<comment type="similarity">
    <text evidence="1">Belongs to the RNA methyltransferase TrmD family.</text>
</comment>
<keyword id="KW-0963">Cytoplasm</keyword>
<keyword id="KW-0489">Methyltransferase</keyword>
<keyword id="KW-1185">Reference proteome</keyword>
<keyword id="KW-0949">S-adenosyl-L-methionine</keyword>
<keyword id="KW-0808">Transferase</keyword>
<keyword id="KW-0819">tRNA processing</keyword>
<sequence>MRIDILSLFPNMFQATMGESIIGKAQDNGFIDINVTDFRQYTTDKHNHVDDAPFGGGAGMLLQAQPIFDAMDAIHEQTKDQYSKGRVILMDPAGRKFDQAYAKELAQEDHLTFICGHYEGYDERIRNLVTDEASLGDYVLTGGELAAMVMIDATVRFVPGVLGNMSSPMGDSFSNGLLEYPQYTRPADFRGMKVPEVLTSGNHQKIKEWRMRESLRRTLHRRPDLLKTAKLSREQQLMLEDIKLDEDPTVPD</sequence>
<accession>A5VKN4</accession>
<feature type="chain" id="PRO_1000061272" description="tRNA (guanine-N(1)-)-methyltransferase">
    <location>
        <begin position="1"/>
        <end position="252"/>
    </location>
</feature>
<feature type="binding site" evidence="1">
    <location>
        <position position="116"/>
    </location>
    <ligand>
        <name>S-adenosyl-L-methionine</name>
        <dbReference type="ChEBI" id="CHEBI:59789"/>
    </ligand>
</feature>
<feature type="binding site" evidence="1">
    <location>
        <begin position="135"/>
        <end position="140"/>
    </location>
    <ligand>
        <name>S-adenosyl-L-methionine</name>
        <dbReference type="ChEBI" id="CHEBI:59789"/>
    </ligand>
</feature>
<proteinExistence type="inferred from homology"/>
<evidence type="ECO:0000255" key="1">
    <source>
        <dbReference type="HAMAP-Rule" id="MF_00605"/>
    </source>
</evidence>
<reference key="1">
    <citation type="journal article" date="2011" name="PLoS Genet.">
        <title>The evolution of host specialization in the vertebrate gut symbiont Lactobacillus reuteri.</title>
        <authorList>
            <person name="Frese S.A."/>
            <person name="Benson A.K."/>
            <person name="Tannock G.W."/>
            <person name="Loach D.M."/>
            <person name="Kim J."/>
            <person name="Zhang M."/>
            <person name="Oh P.L."/>
            <person name="Heng N.C."/>
            <person name="Patil P.B."/>
            <person name="Juge N."/>
            <person name="Mackenzie D.A."/>
            <person name="Pearson B.M."/>
            <person name="Lapidus A."/>
            <person name="Dalin E."/>
            <person name="Tice H."/>
            <person name="Goltsman E."/>
            <person name="Land M."/>
            <person name="Hauser L."/>
            <person name="Ivanova N."/>
            <person name="Kyrpides N.C."/>
            <person name="Walter J."/>
        </authorList>
    </citation>
    <scope>NUCLEOTIDE SEQUENCE [LARGE SCALE GENOMIC DNA]</scope>
    <source>
        <strain>DSM 20016</strain>
    </source>
</reference>
<name>TRMD_LIMRD</name>
<protein>
    <recommendedName>
        <fullName evidence="1">tRNA (guanine-N(1)-)-methyltransferase</fullName>
        <ecNumber evidence="1">2.1.1.228</ecNumber>
    </recommendedName>
    <alternativeName>
        <fullName evidence="1">M1G-methyltransferase</fullName>
    </alternativeName>
    <alternativeName>
        <fullName evidence="1">tRNA [GM37] methyltransferase</fullName>
    </alternativeName>
</protein>